<accession>C4ZYF4</accession>
<sequence>MDVTAKYELIGLMAYPIRHSLSPEMQNKALEKAGLPFTYMAFEVDNDSFPGAIEGLKALKMRGTGVSMPNKQLACEYVDELTPAAKLVGAINTIVNDDGYLRGYNTDGTGHIRAIKESGFDIKGKTMVLLGAGGASTAIGAQGAIEGLKEIKLFNRRDEFFDKALAFAQRVNENTDCVVTVTDLADQQAFAEALASADILTNGTKVGMKPLENESLVNDISLLHPGLLVTECVYNPHMTKLLQQAQQAGCKTIDGYGMLLWQGAEQFTLWTGKDFPLEYVKQVMGFGA</sequence>
<protein>
    <recommendedName>
        <fullName evidence="1">Quinate/shikimate dehydrogenase</fullName>
        <ecNumber evidence="1">1.1.1.282</ecNumber>
    </recommendedName>
    <alternativeName>
        <fullName evidence="1">NAD-dependent shikimate 5-dehydrogenase</fullName>
    </alternativeName>
</protein>
<feature type="chain" id="PRO_1000215614" description="Quinate/shikimate dehydrogenase">
    <location>
        <begin position="1"/>
        <end position="288"/>
    </location>
</feature>
<feature type="binding site" evidence="1">
    <location>
        <position position="71"/>
    </location>
    <ligand>
        <name>substrate</name>
    </ligand>
</feature>
<feature type="binding site" evidence="1">
    <location>
        <position position="107"/>
    </location>
    <ligand>
        <name>substrate</name>
    </ligand>
</feature>
<feature type="binding site" evidence="1">
    <location>
        <begin position="132"/>
        <end position="135"/>
    </location>
    <ligand>
        <name>NAD(+)</name>
        <dbReference type="ChEBI" id="CHEBI:57540"/>
    </ligand>
</feature>
<feature type="binding site" evidence="1">
    <location>
        <begin position="155"/>
        <end position="158"/>
    </location>
    <ligand>
        <name>NAD(+)</name>
        <dbReference type="ChEBI" id="CHEBI:57540"/>
    </ligand>
</feature>
<feature type="binding site" evidence="1">
    <location>
        <position position="205"/>
    </location>
    <ligand>
        <name>NAD(+)</name>
        <dbReference type="ChEBI" id="CHEBI:57540"/>
    </ligand>
</feature>
<feature type="binding site" evidence="1">
    <location>
        <begin position="232"/>
        <end position="235"/>
    </location>
    <ligand>
        <name>NAD(+)</name>
        <dbReference type="ChEBI" id="CHEBI:57540"/>
    </ligand>
</feature>
<feature type="binding site" evidence="1">
    <location>
        <position position="255"/>
    </location>
    <ligand>
        <name>NAD(+)</name>
        <dbReference type="ChEBI" id="CHEBI:57540"/>
    </ligand>
</feature>
<keyword id="KW-0028">Amino-acid biosynthesis</keyword>
<keyword id="KW-0057">Aromatic amino acid biosynthesis</keyword>
<keyword id="KW-0520">NAD</keyword>
<keyword id="KW-0521">NADP</keyword>
<keyword id="KW-0560">Oxidoreductase</keyword>
<dbReference type="EC" id="1.1.1.282" evidence="1"/>
<dbReference type="EMBL" id="CP001396">
    <property type="protein sequence ID" value="ACR65393.1"/>
    <property type="molecule type" value="Genomic_DNA"/>
</dbReference>
<dbReference type="RefSeq" id="WP_000383469.1">
    <property type="nucleotide sequence ID" value="NC_012759.1"/>
</dbReference>
<dbReference type="SMR" id="C4ZYF4"/>
<dbReference type="GeneID" id="75171755"/>
<dbReference type="KEGG" id="ebw:BWG_1506"/>
<dbReference type="HOGENOM" id="CLU_044063_4_4_6"/>
<dbReference type="UniPathway" id="UPA00053">
    <property type="reaction ID" value="UER00087"/>
</dbReference>
<dbReference type="GO" id="GO:0030266">
    <property type="term" value="F:quinate 3-dehydrogenase (NAD+) activity"/>
    <property type="evidence" value="ECO:0007669"/>
    <property type="project" value="UniProtKB-UniRule"/>
</dbReference>
<dbReference type="GO" id="GO:0052733">
    <property type="term" value="F:quinate 3-dehydrogenase (NADP+) activity"/>
    <property type="evidence" value="ECO:0007669"/>
    <property type="project" value="InterPro"/>
</dbReference>
<dbReference type="GO" id="GO:0052734">
    <property type="term" value="F:shikimate 3-dehydrogenase (NAD+) activity"/>
    <property type="evidence" value="ECO:0007669"/>
    <property type="project" value="InterPro"/>
</dbReference>
<dbReference type="GO" id="GO:0004764">
    <property type="term" value="F:shikimate 3-dehydrogenase (NADP+) activity"/>
    <property type="evidence" value="ECO:0007669"/>
    <property type="project" value="UniProtKB-UniRule"/>
</dbReference>
<dbReference type="GO" id="GO:0008652">
    <property type="term" value="P:amino acid biosynthetic process"/>
    <property type="evidence" value="ECO:0007669"/>
    <property type="project" value="UniProtKB-KW"/>
</dbReference>
<dbReference type="GO" id="GO:0009073">
    <property type="term" value="P:aromatic amino acid family biosynthetic process"/>
    <property type="evidence" value="ECO:0007669"/>
    <property type="project" value="UniProtKB-KW"/>
</dbReference>
<dbReference type="GO" id="GO:0009423">
    <property type="term" value="P:chorismate biosynthetic process"/>
    <property type="evidence" value="ECO:0007669"/>
    <property type="project" value="UniProtKB-UniRule"/>
</dbReference>
<dbReference type="GO" id="GO:0019632">
    <property type="term" value="P:shikimate metabolic process"/>
    <property type="evidence" value="ECO:0007669"/>
    <property type="project" value="TreeGrafter"/>
</dbReference>
<dbReference type="CDD" id="cd01065">
    <property type="entry name" value="NAD_bind_Shikimate_DH"/>
    <property type="match status" value="1"/>
</dbReference>
<dbReference type="FunFam" id="3.40.50.10860:FF:000004">
    <property type="entry name" value="Quinate/shikimate dehydrogenase"/>
    <property type="match status" value="1"/>
</dbReference>
<dbReference type="FunFam" id="3.40.50.720:FF:000086">
    <property type="entry name" value="Quinate/shikimate dehydrogenase"/>
    <property type="match status" value="1"/>
</dbReference>
<dbReference type="Gene3D" id="3.40.50.10860">
    <property type="entry name" value="Leucine Dehydrogenase, chain A, domain 1"/>
    <property type="match status" value="1"/>
</dbReference>
<dbReference type="Gene3D" id="3.40.50.720">
    <property type="entry name" value="NAD(P)-binding Rossmann-like Domain"/>
    <property type="match status" value="1"/>
</dbReference>
<dbReference type="HAMAP" id="MF_00222">
    <property type="entry name" value="Shikimate_DH_AroE"/>
    <property type="match status" value="1"/>
</dbReference>
<dbReference type="HAMAP" id="MF_01578">
    <property type="entry name" value="Shikimate_DH_YdiB"/>
    <property type="match status" value="1"/>
</dbReference>
<dbReference type="InterPro" id="IPR046346">
    <property type="entry name" value="Aminoacid_DH-like_N_sf"/>
</dbReference>
<dbReference type="InterPro" id="IPR036291">
    <property type="entry name" value="NAD(P)-bd_dom_sf"/>
</dbReference>
<dbReference type="InterPro" id="IPR022872">
    <property type="entry name" value="Quinate/Shikimate_DH"/>
</dbReference>
<dbReference type="InterPro" id="IPR041121">
    <property type="entry name" value="SDH_C"/>
</dbReference>
<dbReference type="InterPro" id="IPR013708">
    <property type="entry name" value="Shikimate_DH-bd_N"/>
</dbReference>
<dbReference type="InterPro" id="IPR022893">
    <property type="entry name" value="Shikimate_DH_fam"/>
</dbReference>
<dbReference type="NCBIfam" id="NF009390">
    <property type="entry name" value="PRK12749.1"/>
    <property type="match status" value="1"/>
</dbReference>
<dbReference type="PANTHER" id="PTHR21089:SF1">
    <property type="entry name" value="BIFUNCTIONAL 3-DEHYDROQUINATE DEHYDRATASE_SHIKIMATE DEHYDROGENASE, CHLOROPLASTIC"/>
    <property type="match status" value="1"/>
</dbReference>
<dbReference type="PANTHER" id="PTHR21089">
    <property type="entry name" value="SHIKIMATE DEHYDROGENASE"/>
    <property type="match status" value="1"/>
</dbReference>
<dbReference type="Pfam" id="PF18317">
    <property type="entry name" value="SDH_C"/>
    <property type="match status" value="1"/>
</dbReference>
<dbReference type="Pfam" id="PF08501">
    <property type="entry name" value="Shikimate_dh_N"/>
    <property type="match status" value="1"/>
</dbReference>
<dbReference type="SUPFAM" id="SSF53223">
    <property type="entry name" value="Aminoacid dehydrogenase-like, N-terminal domain"/>
    <property type="match status" value="1"/>
</dbReference>
<dbReference type="SUPFAM" id="SSF51735">
    <property type="entry name" value="NAD(P)-binding Rossmann-fold domains"/>
    <property type="match status" value="1"/>
</dbReference>
<evidence type="ECO:0000255" key="1">
    <source>
        <dbReference type="HAMAP-Rule" id="MF_01578"/>
    </source>
</evidence>
<organism>
    <name type="scientific">Escherichia coli (strain K12 / MC4100 / BW2952)</name>
    <dbReference type="NCBI Taxonomy" id="595496"/>
    <lineage>
        <taxon>Bacteria</taxon>
        <taxon>Pseudomonadati</taxon>
        <taxon>Pseudomonadota</taxon>
        <taxon>Gammaproteobacteria</taxon>
        <taxon>Enterobacterales</taxon>
        <taxon>Enterobacteriaceae</taxon>
        <taxon>Escherichia</taxon>
    </lineage>
</organism>
<proteinExistence type="inferred from homology"/>
<comment type="function">
    <text evidence="1">The actual biological function of YdiB remains unclear, nor is it known whether 3-dehydroshikimate or quinate represents the natural substrate. Catalyzes the reversible NAD-dependent reduction of both 3-dehydroshikimate (DHSA) and 3-dehydroquinate to yield shikimate (SA) and quinate, respectively. It can use both NAD or NADP for catalysis, however it has higher catalytic efficiency with NAD.</text>
</comment>
<comment type="catalytic activity">
    <reaction evidence="1">
        <text>L-quinate + NAD(+) = 3-dehydroquinate + NADH + H(+)</text>
        <dbReference type="Rhea" id="RHEA:22364"/>
        <dbReference type="ChEBI" id="CHEBI:15378"/>
        <dbReference type="ChEBI" id="CHEBI:29751"/>
        <dbReference type="ChEBI" id="CHEBI:32364"/>
        <dbReference type="ChEBI" id="CHEBI:57540"/>
        <dbReference type="ChEBI" id="CHEBI:57945"/>
        <dbReference type="EC" id="1.1.1.282"/>
    </reaction>
</comment>
<comment type="catalytic activity">
    <reaction evidence="1">
        <text>L-quinate + NADP(+) = 3-dehydroquinate + NADPH + H(+)</text>
        <dbReference type="Rhea" id="RHEA:18425"/>
        <dbReference type="ChEBI" id="CHEBI:15378"/>
        <dbReference type="ChEBI" id="CHEBI:29751"/>
        <dbReference type="ChEBI" id="CHEBI:32364"/>
        <dbReference type="ChEBI" id="CHEBI:57783"/>
        <dbReference type="ChEBI" id="CHEBI:58349"/>
        <dbReference type="EC" id="1.1.1.282"/>
    </reaction>
</comment>
<comment type="catalytic activity">
    <reaction evidence="1">
        <text>shikimate + NADP(+) = 3-dehydroshikimate + NADPH + H(+)</text>
        <dbReference type="Rhea" id="RHEA:17737"/>
        <dbReference type="ChEBI" id="CHEBI:15378"/>
        <dbReference type="ChEBI" id="CHEBI:16630"/>
        <dbReference type="ChEBI" id="CHEBI:36208"/>
        <dbReference type="ChEBI" id="CHEBI:57783"/>
        <dbReference type="ChEBI" id="CHEBI:58349"/>
        <dbReference type="EC" id="1.1.1.282"/>
    </reaction>
</comment>
<comment type="catalytic activity">
    <reaction evidence="1">
        <text>shikimate + NAD(+) = 3-dehydroshikimate + NADH + H(+)</text>
        <dbReference type="Rhea" id="RHEA:17741"/>
        <dbReference type="ChEBI" id="CHEBI:15378"/>
        <dbReference type="ChEBI" id="CHEBI:16630"/>
        <dbReference type="ChEBI" id="CHEBI:36208"/>
        <dbReference type="ChEBI" id="CHEBI:57540"/>
        <dbReference type="ChEBI" id="CHEBI:57945"/>
        <dbReference type="EC" id="1.1.1.282"/>
    </reaction>
</comment>
<comment type="pathway">
    <text evidence="1">Metabolic intermediate biosynthesis; chorismate biosynthesis; chorismate from D-erythrose 4-phosphate and phosphoenolpyruvate: step 4/7.</text>
</comment>
<comment type="subunit">
    <text evidence="1">Homodimer.</text>
</comment>
<comment type="similarity">
    <text evidence="1">Belongs to the shikimate dehydrogenase family.</text>
</comment>
<name>YDIB_ECOBW</name>
<reference key="1">
    <citation type="journal article" date="2009" name="J. Bacteriol.">
        <title>Genomic sequencing reveals regulatory mutations and recombinational events in the widely used MC4100 lineage of Escherichia coli K-12.</title>
        <authorList>
            <person name="Ferenci T."/>
            <person name="Zhou Z."/>
            <person name="Betteridge T."/>
            <person name="Ren Y."/>
            <person name="Liu Y."/>
            <person name="Feng L."/>
            <person name="Reeves P.R."/>
            <person name="Wang L."/>
        </authorList>
    </citation>
    <scope>NUCLEOTIDE SEQUENCE [LARGE SCALE GENOMIC DNA]</scope>
    <source>
        <strain>K12 / MC4100 / BW2952</strain>
    </source>
</reference>
<gene>
    <name evidence="1" type="primary">ydiB</name>
    <name type="ordered locus">BWG_1506</name>
</gene>